<sequence>MNKDLAAMRVGYAHQGADGRYVDSDLDADQLIGGWLPLMRLWLEDAVEAGVPEPNAMTLGTVDEHGHPCTRTVLCKGLSTDGVLFFTNYDSDKGRQLEAVPYASVTFTWVPVARQITVRGPVERVSAEVTDEYWHSRPRGSRLGAWASEQSKPIGSRAELDAALLHAAERFPVDVDIPVRPDWGGILIRPAVVEFWQGRANRMHNRIRTSLVDGSWTVERLQP</sequence>
<proteinExistence type="inferred from homology"/>
<feature type="chain" id="PRO_0000255882" description="Pyridoxine/pyridoxamine 5'-phosphate oxidase">
    <location>
        <begin position="1"/>
        <end position="223"/>
    </location>
</feature>
<feature type="binding site" evidence="1">
    <location>
        <begin position="9"/>
        <end position="12"/>
    </location>
    <ligand>
        <name>substrate</name>
    </ligand>
</feature>
<feature type="binding site" evidence="1">
    <location>
        <begin position="71"/>
        <end position="76"/>
    </location>
    <ligand>
        <name>FMN</name>
        <dbReference type="ChEBI" id="CHEBI:58210"/>
    </ligand>
</feature>
<feature type="binding site" evidence="1">
    <location>
        <position position="76"/>
    </location>
    <ligand>
        <name>substrate</name>
    </ligand>
</feature>
<feature type="binding site" evidence="1">
    <location>
        <begin position="86"/>
        <end position="87"/>
    </location>
    <ligand>
        <name>FMN</name>
        <dbReference type="ChEBI" id="CHEBI:58210"/>
    </ligand>
</feature>
<feature type="binding site" evidence="1">
    <location>
        <position position="93"/>
    </location>
    <ligand>
        <name>FMN</name>
        <dbReference type="ChEBI" id="CHEBI:58210"/>
    </ligand>
</feature>
<feature type="binding site" evidence="1">
    <location>
        <position position="115"/>
    </location>
    <ligand>
        <name>FMN</name>
        <dbReference type="ChEBI" id="CHEBI:58210"/>
    </ligand>
</feature>
<feature type="binding site" evidence="1">
    <location>
        <position position="133"/>
    </location>
    <ligand>
        <name>substrate</name>
    </ligand>
</feature>
<feature type="binding site" evidence="1">
    <location>
        <position position="137"/>
    </location>
    <ligand>
        <name>substrate</name>
    </ligand>
</feature>
<feature type="binding site" evidence="1">
    <location>
        <position position="141"/>
    </location>
    <ligand>
        <name>substrate</name>
    </ligand>
</feature>
<feature type="binding site" evidence="1">
    <location>
        <begin position="150"/>
        <end position="151"/>
    </location>
    <ligand>
        <name>FMN</name>
        <dbReference type="ChEBI" id="CHEBI:58210"/>
    </ligand>
</feature>
<feature type="binding site" evidence="1">
    <location>
        <position position="196"/>
    </location>
    <ligand>
        <name>FMN</name>
        <dbReference type="ChEBI" id="CHEBI:58210"/>
    </ligand>
</feature>
<feature type="binding site" evidence="1">
    <location>
        <begin position="202"/>
        <end position="204"/>
    </location>
    <ligand>
        <name>substrate</name>
    </ligand>
</feature>
<feature type="binding site" evidence="1">
    <location>
        <position position="206"/>
    </location>
    <ligand>
        <name>FMN</name>
        <dbReference type="ChEBI" id="CHEBI:58210"/>
    </ligand>
</feature>
<reference key="1">
    <citation type="journal article" date="2006" name="Proc. Natl. Acad. Sci. U.S.A.">
        <title>The complete genome of Rhodococcus sp. RHA1 provides insights into a catabolic powerhouse.</title>
        <authorList>
            <person name="McLeod M.P."/>
            <person name="Warren R.L."/>
            <person name="Hsiao W.W.L."/>
            <person name="Araki N."/>
            <person name="Myhre M."/>
            <person name="Fernandes C."/>
            <person name="Miyazawa D."/>
            <person name="Wong W."/>
            <person name="Lillquist A.L."/>
            <person name="Wang D."/>
            <person name="Dosanjh M."/>
            <person name="Hara H."/>
            <person name="Petrescu A."/>
            <person name="Morin R.D."/>
            <person name="Yang G."/>
            <person name="Stott J.M."/>
            <person name="Schein J.E."/>
            <person name="Shin H."/>
            <person name="Smailus D."/>
            <person name="Siddiqui A.S."/>
            <person name="Marra M.A."/>
            <person name="Jones S.J.M."/>
            <person name="Holt R."/>
            <person name="Brinkman F.S.L."/>
            <person name="Miyauchi K."/>
            <person name="Fukuda M."/>
            <person name="Davies J.E."/>
            <person name="Mohn W.W."/>
            <person name="Eltis L.D."/>
        </authorList>
    </citation>
    <scope>NUCLEOTIDE SEQUENCE [LARGE SCALE GENOMIC DNA]</scope>
    <source>
        <strain>RHA1</strain>
    </source>
</reference>
<keyword id="KW-0285">Flavoprotein</keyword>
<keyword id="KW-0288">FMN</keyword>
<keyword id="KW-0560">Oxidoreductase</keyword>
<keyword id="KW-0664">Pyridoxine biosynthesis</keyword>
<accession>Q0S6R1</accession>
<dbReference type="EC" id="1.4.3.5" evidence="1"/>
<dbReference type="EMBL" id="CP000431">
    <property type="protein sequence ID" value="ABG96775.1"/>
    <property type="status" value="ALT_INIT"/>
    <property type="molecule type" value="Genomic_DNA"/>
</dbReference>
<dbReference type="RefSeq" id="WP_081437464.1">
    <property type="nucleotide sequence ID" value="NC_008268.1"/>
</dbReference>
<dbReference type="SMR" id="Q0S6R1"/>
<dbReference type="KEGG" id="rha:RHA1_ro04994"/>
<dbReference type="eggNOG" id="COG0259">
    <property type="taxonomic scope" value="Bacteria"/>
</dbReference>
<dbReference type="HOGENOM" id="CLU_032263_2_2_11"/>
<dbReference type="OrthoDB" id="9780392at2"/>
<dbReference type="UniPathway" id="UPA01068">
    <property type="reaction ID" value="UER00304"/>
</dbReference>
<dbReference type="UniPathway" id="UPA01068">
    <property type="reaction ID" value="UER00305"/>
</dbReference>
<dbReference type="Proteomes" id="UP000008710">
    <property type="component" value="Chromosome"/>
</dbReference>
<dbReference type="GO" id="GO:0010181">
    <property type="term" value="F:FMN binding"/>
    <property type="evidence" value="ECO:0007669"/>
    <property type="project" value="UniProtKB-UniRule"/>
</dbReference>
<dbReference type="GO" id="GO:0004733">
    <property type="term" value="F:pyridoxamine phosphate oxidase activity"/>
    <property type="evidence" value="ECO:0007669"/>
    <property type="project" value="UniProtKB-UniRule"/>
</dbReference>
<dbReference type="GO" id="GO:0008615">
    <property type="term" value="P:pyridoxine biosynthetic process"/>
    <property type="evidence" value="ECO:0007669"/>
    <property type="project" value="UniProtKB-KW"/>
</dbReference>
<dbReference type="Gene3D" id="2.30.110.10">
    <property type="entry name" value="Electron Transport, Fmn-binding Protein, Chain A"/>
    <property type="match status" value="1"/>
</dbReference>
<dbReference type="HAMAP" id="MF_01629">
    <property type="entry name" value="PdxH"/>
    <property type="match status" value="1"/>
</dbReference>
<dbReference type="InterPro" id="IPR000659">
    <property type="entry name" value="Pyridox_Oxase"/>
</dbReference>
<dbReference type="InterPro" id="IPR019740">
    <property type="entry name" value="Pyridox_Oxase_CS"/>
</dbReference>
<dbReference type="InterPro" id="IPR011576">
    <property type="entry name" value="Pyridox_Oxase_N"/>
</dbReference>
<dbReference type="InterPro" id="IPR019576">
    <property type="entry name" value="Pyridoxamine_oxidase_dimer_C"/>
</dbReference>
<dbReference type="InterPro" id="IPR012349">
    <property type="entry name" value="Split_barrel_FMN-bd"/>
</dbReference>
<dbReference type="NCBIfam" id="TIGR00558">
    <property type="entry name" value="pdxH"/>
    <property type="match status" value="1"/>
</dbReference>
<dbReference type="NCBIfam" id="NF004231">
    <property type="entry name" value="PRK05679.1"/>
    <property type="match status" value="1"/>
</dbReference>
<dbReference type="PANTHER" id="PTHR10851:SF0">
    <property type="entry name" value="PYRIDOXINE-5'-PHOSPHATE OXIDASE"/>
    <property type="match status" value="1"/>
</dbReference>
<dbReference type="PANTHER" id="PTHR10851">
    <property type="entry name" value="PYRIDOXINE-5-PHOSPHATE OXIDASE"/>
    <property type="match status" value="1"/>
</dbReference>
<dbReference type="Pfam" id="PF10590">
    <property type="entry name" value="PNP_phzG_C"/>
    <property type="match status" value="1"/>
</dbReference>
<dbReference type="Pfam" id="PF01243">
    <property type="entry name" value="PNPOx_N"/>
    <property type="match status" value="1"/>
</dbReference>
<dbReference type="PIRSF" id="PIRSF000190">
    <property type="entry name" value="Pyd_amn-ph_oxd"/>
    <property type="match status" value="1"/>
</dbReference>
<dbReference type="SUPFAM" id="SSF50475">
    <property type="entry name" value="FMN-binding split barrel"/>
    <property type="match status" value="1"/>
</dbReference>
<dbReference type="PROSITE" id="PS01064">
    <property type="entry name" value="PYRIDOX_OXIDASE"/>
    <property type="match status" value="1"/>
</dbReference>
<comment type="function">
    <text evidence="1">Catalyzes the oxidation of either pyridoxine 5'-phosphate (PNP) or pyridoxamine 5'-phosphate (PMP) into pyridoxal 5'-phosphate (PLP).</text>
</comment>
<comment type="catalytic activity">
    <reaction evidence="1">
        <text>pyridoxamine 5'-phosphate + O2 + H2O = pyridoxal 5'-phosphate + H2O2 + NH4(+)</text>
        <dbReference type="Rhea" id="RHEA:15817"/>
        <dbReference type="ChEBI" id="CHEBI:15377"/>
        <dbReference type="ChEBI" id="CHEBI:15379"/>
        <dbReference type="ChEBI" id="CHEBI:16240"/>
        <dbReference type="ChEBI" id="CHEBI:28938"/>
        <dbReference type="ChEBI" id="CHEBI:58451"/>
        <dbReference type="ChEBI" id="CHEBI:597326"/>
        <dbReference type="EC" id="1.4.3.5"/>
    </reaction>
</comment>
<comment type="catalytic activity">
    <reaction evidence="1">
        <text>pyridoxine 5'-phosphate + O2 = pyridoxal 5'-phosphate + H2O2</text>
        <dbReference type="Rhea" id="RHEA:15149"/>
        <dbReference type="ChEBI" id="CHEBI:15379"/>
        <dbReference type="ChEBI" id="CHEBI:16240"/>
        <dbReference type="ChEBI" id="CHEBI:58589"/>
        <dbReference type="ChEBI" id="CHEBI:597326"/>
        <dbReference type="EC" id="1.4.3.5"/>
    </reaction>
</comment>
<comment type="cofactor">
    <cofactor evidence="1">
        <name>FMN</name>
        <dbReference type="ChEBI" id="CHEBI:58210"/>
    </cofactor>
    <text evidence="1">Binds 1 FMN per subunit.</text>
</comment>
<comment type="pathway">
    <text evidence="1">Cofactor metabolism; pyridoxal 5'-phosphate salvage; pyridoxal 5'-phosphate from pyridoxamine 5'-phosphate: step 1/1.</text>
</comment>
<comment type="pathway">
    <text evidence="1">Cofactor metabolism; pyridoxal 5'-phosphate salvage; pyridoxal 5'-phosphate from pyridoxine 5'-phosphate: step 1/1.</text>
</comment>
<comment type="subunit">
    <text evidence="1">Homodimer.</text>
</comment>
<comment type="similarity">
    <text evidence="1">Belongs to the pyridoxamine 5'-phosphate oxidase family.</text>
</comment>
<comment type="sequence caution" evidence="2">
    <conflict type="erroneous initiation">
        <sequence resource="EMBL-CDS" id="ABG96775"/>
    </conflict>
</comment>
<name>PDXH_RHOJR</name>
<organism>
    <name type="scientific">Rhodococcus jostii (strain RHA1)</name>
    <dbReference type="NCBI Taxonomy" id="101510"/>
    <lineage>
        <taxon>Bacteria</taxon>
        <taxon>Bacillati</taxon>
        <taxon>Actinomycetota</taxon>
        <taxon>Actinomycetes</taxon>
        <taxon>Mycobacteriales</taxon>
        <taxon>Nocardiaceae</taxon>
        <taxon>Rhodococcus</taxon>
    </lineage>
</organism>
<evidence type="ECO:0000255" key="1">
    <source>
        <dbReference type="HAMAP-Rule" id="MF_01629"/>
    </source>
</evidence>
<evidence type="ECO:0000305" key="2"/>
<gene>
    <name evidence="1" type="primary">pdxH</name>
    <name type="ordered locus">RHA1_ro04994</name>
</gene>
<protein>
    <recommendedName>
        <fullName evidence="1">Pyridoxine/pyridoxamine 5'-phosphate oxidase</fullName>
        <ecNumber evidence="1">1.4.3.5</ecNumber>
    </recommendedName>
    <alternativeName>
        <fullName evidence="1">PNP/PMP oxidase</fullName>
        <shortName evidence="1">PNPOx</shortName>
    </alternativeName>
    <alternativeName>
        <fullName evidence="1">Pyridoxal 5'-phosphate synthase</fullName>
    </alternativeName>
</protein>